<evidence type="ECO:0000255" key="1">
    <source>
        <dbReference type="HAMAP-Rule" id="MF_00395"/>
    </source>
</evidence>
<feature type="chain" id="PRO_0000275558" description="Cytochrome b6-f complex subunit 8">
    <location>
        <begin position="1"/>
        <end position="29"/>
    </location>
</feature>
<feature type="transmembrane region" description="Helical" evidence="1">
    <location>
        <begin position="3"/>
        <end position="23"/>
    </location>
</feature>
<comment type="function">
    <text evidence="1">Component of the cytochrome b6-f complex, which mediates electron transfer between photosystem II (PSII) and photosystem I (PSI), cyclic electron flow around PSI, and state transitions.</text>
</comment>
<comment type="subunit">
    <text evidence="1">The 4 large subunits of the cytochrome b6-f complex are cytochrome b6, subunit IV (17 kDa polypeptide, PetD), cytochrome f and the Rieske protein, while the 4 small subunits are PetG, PetL, PetM and PetN. The complex functions as a dimer.</text>
</comment>
<comment type="subcellular location">
    <subcellularLocation>
        <location>Plastid</location>
        <location>Chloroplast thylakoid membrane</location>
        <topology>Single-pass membrane protein</topology>
    </subcellularLocation>
</comment>
<comment type="similarity">
    <text evidence="1">Belongs to the PetN family.</text>
</comment>
<reference key="1">
    <citation type="journal article" date="2006" name="Mol. Genet. Genomics">
        <title>The chloroplast genome of Nicotiana sylvestris and Nicotiana tomentosiformis: complete sequencing confirms that the Nicotiana sylvestris progenitor is the maternal genome donor of Nicotiana tabacum.</title>
        <authorList>
            <person name="Yukawa M."/>
            <person name="Tsudzuki T."/>
            <person name="Sugiura M."/>
        </authorList>
    </citation>
    <scope>NUCLEOTIDE SEQUENCE [LARGE SCALE GENOMIC DNA]</scope>
</reference>
<protein>
    <recommendedName>
        <fullName evidence="1">Cytochrome b6-f complex subunit 8</fullName>
    </recommendedName>
    <alternativeName>
        <fullName evidence="1">Cytochrome b6-f complex subunit PetN</fullName>
    </alternativeName>
    <alternativeName>
        <fullName evidence="1">Cytochrome b6-f complex subunit VIII</fullName>
    </alternativeName>
</protein>
<keyword id="KW-0150">Chloroplast</keyword>
<keyword id="KW-0249">Electron transport</keyword>
<keyword id="KW-0472">Membrane</keyword>
<keyword id="KW-0602">Photosynthesis</keyword>
<keyword id="KW-0934">Plastid</keyword>
<keyword id="KW-1185">Reference proteome</keyword>
<keyword id="KW-0793">Thylakoid</keyword>
<keyword id="KW-0812">Transmembrane</keyword>
<keyword id="KW-1133">Transmembrane helix</keyword>
<keyword id="KW-0813">Transport</keyword>
<accession>Q3C1G5</accession>
<proteinExistence type="inferred from homology"/>
<sequence>MDIVSLAWAALMVVFTFSLSLVVWGRSGL</sequence>
<organism>
    <name type="scientific">Nicotiana sylvestris</name>
    <name type="common">Wood tobacco</name>
    <name type="synonym">South American tobacco</name>
    <dbReference type="NCBI Taxonomy" id="4096"/>
    <lineage>
        <taxon>Eukaryota</taxon>
        <taxon>Viridiplantae</taxon>
        <taxon>Streptophyta</taxon>
        <taxon>Embryophyta</taxon>
        <taxon>Tracheophyta</taxon>
        <taxon>Spermatophyta</taxon>
        <taxon>Magnoliopsida</taxon>
        <taxon>eudicotyledons</taxon>
        <taxon>Gunneridae</taxon>
        <taxon>Pentapetalae</taxon>
        <taxon>asterids</taxon>
        <taxon>lamiids</taxon>
        <taxon>Solanales</taxon>
        <taxon>Solanaceae</taxon>
        <taxon>Nicotianoideae</taxon>
        <taxon>Nicotianeae</taxon>
        <taxon>Nicotiana</taxon>
    </lineage>
</organism>
<dbReference type="EMBL" id="AB237912">
    <property type="protein sequence ID" value="BAE46641.1"/>
    <property type="molecule type" value="Genomic_DNA"/>
</dbReference>
<dbReference type="RefSeq" id="YP_358666.1">
    <property type="nucleotide sequence ID" value="NC_007500.1"/>
</dbReference>
<dbReference type="SMR" id="Q3C1G5"/>
<dbReference type="GeneID" id="3735075"/>
<dbReference type="KEGG" id="nsy:3735075"/>
<dbReference type="Proteomes" id="UP000189701">
    <property type="component" value="Chloroplast Pltd"/>
</dbReference>
<dbReference type="GO" id="GO:0009535">
    <property type="term" value="C:chloroplast thylakoid membrane"/>
    <property type="evidence" value="ECO:0007669"/>
    <property type="project" value="UniProtKB-SubCell"/>
</dbReference>
<dbReference type="GO" id="GO:0009512">
    <property type="term" value="C:cytochrome b6f complex"/>
    <property type="evidence" value="ECO:0007669"/>
    <property type="project" value="InterPro"/>
</dbReference>
<dbReference type="GO" id="GO:0045158">
    <property type="term" value="F:electron transporter, transferring electrons within cytochrome b6/f complex of photosystem II activity"/>
    <property type="evidence" value="ECO:0007669"/>
    <property type="project" value="InterPro"/>
</dbReference>
<dbReference type="GO" id="GO:0017004">
    <property type="term" value="P:cytochrome complex assembly"/>
    <property type="evidence" value="ECO:0007669"/>
    <property type="project" value="UniProtKB-UniRule"/>
</dbReference>
<dbReference type="GO" id="GO:0015979">
    <property type="term" value="P:photosynthesis"/>
    <property type="evidence" value="ECO:0007669"/>
    <property type="project" value="UniProtKB-KW"/>
</dbReference>
<dbReference type="HAMAP" id="MF_00395">
    <property type="entry name" value="Cytb6_f_PetN"/>
    <property type="match status" value="1"/>
</dbReference>
<dbReference type="InterPro" id="IPR036143">
    <property type="entry name" value="Cytochr_b6-f_cplx_su8_sf"/>
</dbReference>
<dbReference type="InterPro" id="IPR005497">
    <property type="entry name" value="Cytochrome_b6-f_cplx_su8"/>
</dbReference>
<dbReference type="Pfam" id="PF03742">
    <property type="entry name" value="PetN"/>
    <property type="match status" value="1"/>
</dbReference>
<dbReference type="SUPFAM" id="SSF103451">
    <property type="entry name" value="PetN subunit of the cytochrome b6f complex"/>
    <property type="match status" value="1"/>
</dbReference>
<name>PETN_NICSY</name>
<gene>
    <name evidence="1" type="primary">petN</name>
</gene>
<geneLocation type="chloroplast"/>